<gene>
    <name type="primary">ERVH48-1</name>
    <name type="synonym">C21orf105</name>
    <name type="synonym">HERV-Fb1</name>
    <name type="synonym">NDUFV3-AS1</name>
</gene>
<keyword id="KW-0002">3D-structure</keyword>
<keyword id="KW-0895">ERV</keyword>
<keyword id="KW-1267">Proteomics identification</keyword>
<keyword id="KW-1185">Reference proteome</keyword>
<keyword id="KW-0964">Secreted</keyword>
<keyword id="KW-0732">Signal</keyword>
<keyword id="KW-0814">Transposable element</keyword>
<dbReference type="EMBL" id="AB610407">
    <property type="protein sequence ID" value="BAN04646.1"/>
    <property type="molecule type" value="mRNA"/>
</dbReference>
<dbReference type="CCDS" id="CCDS93101.1"/>
<dbReference type="RefSeq" id="NP_001295420.1">
    <property type="nucleotide sequence ID" value="NM_001308491.2"/>
</dbReference>
<dbReference type="PDB" id="8OUI">
    <property type="method" value="EM"/>
    <property type="resolution" value="3.39 A"/>
    <property type="chains" value="D=1-160"/>
</dbReference>
<dbReference type="PDBsum" id="8OUI"/>
<dbReference type="EMDB" id="EMD-17193"/>
<dbReference type="SMR" id="M5A8F1"/>
<dbReference type="BioMuta" id="HGNC:17216"/>
<dbReference type="jPOST" id="M5A8F1"/>
<dbReference type="MassIVE" id="M5A8F1"/>
<dbReference type="PeptideAtlas" id="M5A8F1"/>
<dbReference type="DNASU" id="90625"/>
<dbReference type="Ensembl" id="ENST00000447535.2">
    <property type="protein sequence ID" value="ENSP00000504647.1"/>
    <property type="gene ID" value="ENSG00000233056.4"/>
</dbReference>
<dbReference type="GeneID" id="90625"/>
<dbReference type="KEGG" id="hsa:90625"/>
<dbReference type="MANE-Select" id="ENST00000447535.2">
    <property type="protein sequence ID" value="ENSP00000504647.1"/>
    <property type="RefSeq nucleotide sequence ID" value="NM_001308491.2"/>
    <property type="RefSeq protein sequence ID" value="NP_001295420.1"/>
</dbReference>
<dbReference type="AGR" id="HGNC:17216"/>
<dbReference type="CTD" id="90625"/>
<dbReference type="DisGeNET" id="90625"/>
<dbReference type="GeneCards" id="ERVH48-1"/>
<dbReference type="HGNC" id="HGNC:17216">
    <property type="gene designation" value="ERVH48-1"/>
</dbReference>
<dbReference type="HPA" id="ENSG00000233056">
    <property type="expression patterns" value="Tissue enriched (placenta)"/>
</dbReference>
<dbReference type="neXtProt" id="NX_M5A8F1"/>
<dbReference type="OpenTargets" id="ENSG00000233056"/>
<dbReference type="VEuPathDB" id="HostDB:ENSG00000233056"/>
<dbReference type="GeneTree" id="ENSGT01000000215029"/>
<dbReference type="InParanoid" id="M5A8F1"/>
<dbReference type="OMA" id="FHYRGKI"/>
<dbReference type="OrthoDB" id="9475629at2759"/>
<dbReference type="PAN-GO" id="M5A8F1">
    <property type="GO annotations" value="0 GO annotations based on evolutionary models"/>
</dbReference>
<dbReference type="PathwayCommons" id="M5A8F1"/>
<dbReference type="SignaLink" id="M5A8F1"/>
<dbReference type="BioGRID-ORCS" id="90625">
    <property type="hits" value="0 hits in 8 CRISPR screens"/>
</dbReference>
<dbReference type="GenomeRNAi" id="90625"/>
<dbReference type="Pharos" id="M5A8F1">
    <property type="development level" value="Tdark"/>
</dbReference>
<dbReference type="PRO" id="PR:M5A8F1"/>
<dbReference type="Proteomes" id="UP000005640">
    <property type="component" value="Chromosome 21"/>
</dbReference>
<dbReference type="RNAct" id="M5A8F1">
    <property type="molecule type" value="protein"/>
</dbReference>
<dbReference type="Bgee" id="ENSG00000233056">
    <property type="expression patterns" value="Expressed in placenta and 106 other cell types or tissues"/>
</dbReference>
<dbReference type="GO" id="GO:0005615">
    <property type="term" value="C:extracellular space"/>
    <property type="evidence" value="ECO:0000314"/>
    <property type="project" value="UniProtKB"/>
</dbReference>
<dbReference type="GO" id="GO:0006949">
    <property type="term" value="P:syncytium formation"/>
    <property type="evidence" value="ECO:0000315"/>
    <property type="project" value="UniProtKB"/>
</dbReference>
<name>SUPYN_HUMAN</name>
<comment type="function">
    <text evidence="3">May play a role in trophoblasts syncytialization, the spontaneous fusion of their plasma membranes, an essential process in placental development. May negatively regulate cell-cell fusion by interacting with SLC1A5, the probable receptor on the cell surface of the fusogenic syncytin-1/ERVW-1.</text>
</comment>
<comment type="subunit">
    <text evidence="3">Interacts (secreted) with SLC1A5; mainly at cell surface.</text>
</comment>
<comment type="subcellular location">
    <subcellularLocation>
        <location evidence="3">Secreted</location>
    </subcellularLocation>
    <text>Also found in cell lysates.</text>
</comment>
<comment type="tissue specificity">
    <text evidence="3">Specifically expressed in placenta by extravillous trophoblasts and syncytiotrophoblasts (at protein level).</text>
</comment>
<comment type="miscellaneous">
    <text>The human genome contains a high percentage of proviral-like elements, also called endogenous retroviruses (ERVs) that are the genomic traces of ancient infections of the germline by exogenous retroviruses. Although most of these elements are defective, some have conserved a functional envelope (env) gene, most probably diverted by the host for its benefit.</text>
</comment>
<evidence type="ECO:0000255" key="1"/>
<evidence type="ECO:0000256" key="2">
    <source>
        <dbReference type="SAM" id="MobiDB-lite"/>
    </source>
</evidence>
<evidence type="ECO:0000269" key="3">
    <source>
    </source>
</evidence>
<evidence type="ECO:0007829" key="4">
    <source>
        <dbReference type="PDB" id="8OUI"/>
    </source>
</evidence>
<organism>
    <name type="scientific">Homo sapiens</name>
    <name type="common">Human</name>
    <dbReference type="NCBI Taxonomy" id="9606"/>
    <lineage>
        <taxon>Eukaryota</taxon>
        <taxon>Metazoa</taxon>
        <taxon>Chordata</taxon>
        <taxon>Craniata</taxon>
        <taxon>Vertebrata</taxon>
        <taxon>Euteleostomi</taxon>
        <taxon>Mammalia</taxon>
        <taxon>Eutheria</taxon>
        <taxon>Euarchontoglires</taxon>
        <taxon>Primates</taxon>
        <taxon>Haplorrhini</taxon>
        <taxon>Catarrhini</taxon>
        <taxon>Hominidae</taxon>
        <taxon>Homo</taxon>
    </lineage>
</organism>
<sequence>MACIYPTTFYTSLPTKSLNMGISLTTILILSVAVLLSTAAPPSCRECYQSLHYRGEMQQYFTYHTHIERSCYGNLIEECVESGKSYYKVKNLGVCGSRNGAICPRGKQWLCFTKIGQWGVNTQVLEDIKREQIIAKAKASKPTTPPENRPRHFHSFIQKL</sequence>
<feature type="signal peptide" evidence="1">
    <location>
        <begin position="1"/>
        <end position="39"/>
    </location>
</feature>
<feature type="chain" id="PRO_0000430056" description="Suppressyn">
    <location>
        <begin position="40"/>
        <end position="160"/>
    </location>
</feature>
<feature type="region of interest" description="Disordered" evidence="2">
    <location>
        <begin position="137"/>
        <end position="160"/>
    </location>
</feature>
<feature type="strand" evidence="4">
    <location>
        <begin position="48"/>
        <end position="51"/>
    </location>
</feature>
<feature type="strand" evidence="4">
    <location>
        <begin position="58"/>
        <end position="63"/>
    </location>
</feature>
<feature type="helix" evidence="4">
    <location>
        <begin position="69"/>
        <end position="71"/>
    </location>
</feature>
<feature type="strand" evidence="4">
    <location>
        <begin position="74"/>
        <end position="81"/>
    </location>
</feature>
<feature type="strand" evidence="4">
    <location>
        <begin position="84"/>
        <end position="90"/>
    </location>
</feature>
<feature type="strand" evidence="4">
    <location>
        <begin position="94"/>
        <end position="98"/>
    </location>
</feature>
<feature type="strand" evidence="4">
    <location>
        <begin position="108"/>
        <end position="115"/>
    </location>
</feature>
<feature type="helix" evidence="4">
    <location>
        <begin position="124"/>
        <end position="139"/>
    </location>
</feature>
<reference key="1">
    <citation type="journal article" date="2013" name="Sci. Rep.">
        <title>A novel human endogenous retroviral protein inhibits cell-cell fusion.</title>
        <authorList>
            <person name="Sugimoto J."/>
            <person name="Sugimoto M."/>
            <person name="Bernstein H."/>
            <person name="Jinno Y."/>
            <person name="Schust D."/>
        </authorList>
    </citation>
    <scope>NUCLEOTIDE SEQUENCE [MRNA]</scope>
    <scope>FUNCTION</scope>
    <scope>INTERACTION WITH SLC1A5</scope>
    <scope>SUBCELLULAR LOCATION</scope>
    <scope>TISSUE SPECIFICITY</scope>
    <source>
        <tissue>Placenta</tissue>
    </source>
</reference>
<proteinExistence type="evidence at protein level"/>
<protein>
    <recommendedName>
        <fullName>Suppressyn</fullName>
    </recommendedName>
    <alternativeName>
        <fullName>Endogenous retrovirus group 48 member 1</fullName>
    </alternativeName>
    <alternativeName>
        <fullName>NDUFV3 antisense RNA 1</fullName>
    </alternativeName>
    <alternativeName>
        <fullName>endogenous retrovirus group Fb member 1</fullName>
    </alternativeName>
</protein>
<accession>M5A8F1</accession>